<sequence>MALWGGRFTQAADQRFKQFNDSLRFDYRLAEQDIVGSVAWSKALVTVGVLTAEEQAQLEEALNVLLEDVRARPQQILESDAEDIHSWVEGKLIDKVGQLGKKLHTGRSRNDQVATDLKLWCKDTVSELLTANRQLQSALVETAQNNQDAVMPGYTHLQRAQPVTFAHWCLAYVEMLARDESRLQDALKRLDVSPLGCGALAGTAYEIDREQLAGWLGFASATRNSLDSVSDRDHVLELLSAAAIGMVHLSRFAEDLIFFNTGEAGFVELSDRVTSGSSLMPQKKNPDALELIRGKCGRVQGALTGMMMTLKGLPLAYNKDMQEDKEGLFDALDTWLDCLHMAALVLDGIQVKRPRCQEAAQQGYANATELADYLVAKGVPFREAHHIVGEAVVEAIRQGKPLEDLPLSELQKFSQVIDEDVYPILSLQSCLDKRAAKGGVSPQQVAQAIAFAQARLG</sequence>
<dbReference type="EC" id="4.3.2.1" evidence="1"/>
<dbReference type="EMBL" id="U00006">
    <property type="protein sequence ID" value="AAC43066.1"/>
    <property type="molecule type" value="Genomic_DNA"/>
</dbReference>
<dbReference type="EMBL" id="U00096">
    <property type="protein sequence ID" value="AAC76942.1"/>
    <property type="molecule type" value="Genomic_DNA"/>
</dbReference>
<dbReference type="EMBL" id="AP009048">
    <property type="protein sequence ID" value="BAE77351.1"/>
    <property type="molecule type" value="Genomic_DNA"/>
</dbReference>
<dbReference type="EMBL" id="M21446">
    <property type="protein sequence ID" value="AAA23479.1"/>
    <property type="molecule type" value="Genomic_DNA"/>
</dbReference>
<dbReference type="EMBL" id="AH005258">
    <property type="protein sequence ID" value="AAB59147.1"/>
    <property type="molecule type" value="Genomic_DNA"/>
</dbReference>
<dbReference type="PIR" id="C65203">
    <property type="entry name" value="C65203"/>
</dbReference>
<dbReference type="RefSeq" id="NP_418395.1">
    <property type="nucleotide sequence ID" value="NC_000913.3"/>
</dbReference>
<dbReference type="RefSeq" id="WP_001230087.1">
    <property type="nucleotide sequence ID" value="NZ_SSZK01000065.1"/>
</dbReference>
<dbReference type="PDB" id="1TJ7">
    <property type="method" value="X-ray"/>
    <property type="resolution" value="2.44 A"/>
    <property type="chains" value="A/B=1-457"/>
</dbReference>
<dbReference type="PDBsum" id="1TJ7"/>
<dbReference type="SMR" id="P11447"/>
<dbReference type="BioGRID" id="4263466">
    <property type="interactions" value="10"/>
</dbReference>
<dbReference type="DIP" id="DIP-9142N"/>
<dbReference type="FunCoup" id="P11447">
    <property type="interactions" value="737"/>
</dbReference>
<dbReference type="STRING" id="511145.b3960"/>
<dbReference type="jPOST" id="P11447"/>
<dbReference type="PaxDb" id="511145-b3960"/>
<dbReference type="EnsemblBacteria" id="AAC76942">
    <property type="protein sequence ID" value="AAC76942"/>
    <property type="gene ID" value="b3960"/>
</dbReference>
<dbReference type="GeneID" id="948463"/>
<dbReference type="KEGG" id="ecj:JW3932"/>
<dbReference type="KEGG" id="eco:b3960"/>
<dbReference type="KEGG" id="ecoc:C3026_21400"/>
<dbReference type="PATRIC" id="fig|1411691.4.peg.2745"/>
<dbReference type="EchoBASE" id="EB1205"/>
<dbReference type="eggNOG" id="COG0165">
    <property type="taxonomic scope" value="Bacteria"/>
</dbReference>
<dbReference type="HOGENOM" id="CLU_027272_2_3_6"/>
<dbReference type="InParanoid" id="P11447"/>
<dbReference type="OMA" id="DFAIEFC"/>
<dbReference type="OrthoDB" id="9769623at2"/>
<dbReference type="PhylomeDB" id="P11447"/>
<dbReference type="BioCyc" id="EcoCyc:ARGSUCCINLYA-MONOMER"/>
<dbReference type="BioCyc" id="MetaCyc:ARGSUCCINLYA-MONOMER"/>
<dbReference type="UniPathway" id="UPA00068">
    <property type="reaction ID" value="UER00114"/>
</dbReference>
<dbReference type="EvolutionaryTrace" id="P11447"/>
<dbReference type="PRO" id="PR:P11447"/>
<dbReference type="Proteomes" id="UP000000625">
    <property type="component" value="Chromosome"/>
</dbReference>
<dbReference type="GO" id="GO:0005829">
    <property type="term" value="C:cytosol"/>
    <property type="evidence" value="ECO:0000318"/>
    <property type="project" value="GO_Central"/>
</dbReference>
<dbReference type="GO" id="GO:0004056">
    <property type="term" value="F:argininosuccinate lyase activity"/>
    <property type="evidence" value="ECO:0000314"/>
    <property type="project" value="EcoCyc"/>
</dbReference>
<dbReference type="GO" id="GO:0042450">
    <property type="term" value="P:arginine biosynthetic process via ornithine"/>
    <property type="evidence" value="ECO:0000318"/>
    <property type="project" value="GO_Central"/>
</dbReference>
<dbReference type="GO" id="GO:0006526">
    <property type="term" value="P:L-arginine biosynthetic process"/>
    <property type="evidence" value="ECO:0007669"/>
    <property type="project" value="UniProtKB-UniRule"/>
</dbReference>
<dbReference type="CDD" id="cd01359">
    <property type="entry name" value="Argininosuccinate_lyase"/>
    <property type="match status" value="1"/>
</dbReference>
<dbReference type="FunFam" id="1.10.275.10:FF:000004">
    <property type="entry name" value="Argininosuccinate lyase"/>
    <property type="match status" value="1"/>
</dbReference>
<dbReference type="FunFam" id="1.10.40.30:FF:000001">
    <property type="entry name" value="Argininosuccinate lyase"/>
    <property type="match status" value="1"/>
</dbReference>
<dbReference type="FunFam" id="1.20.200.10:FF:000006">
    <property type="entry name" value="Argininosuccinate lyase"/>
    <property type="match status" value="1"/>
</dbReference>
<dbReference type="Gene3D" id="1.10.40.30">
    <property type="entry name" value="Fumarase/aspartase (C-terminal domain)"/>
    <property type="match status" value="1"/>
</dbReference>
<dbReference type="Gene3D" id="1.20.200.10">
    <property type="entry name" value="Fumarase/aspartase (Central domain)"/>
    <property type="match status" value="1"/>
</dbReference>
<dbReference type="Gene3D" id="1.10.275.10">
    <property type="entry name" value="Fumarase/aspartase (N-terminal domain)"/>
    <property type="match status" value="1"/>
</dbReference>
<dbReference type="HAMAP" id="MF_00006">
    <property type="entry name" value="Arg_succ_lyase"/>
    <property type="match status" value="1"/>
</dbReference>
<dbReference type="InterPro" id="IPR029419">
    <property type="entry name" value="Arg_succ_lyase_C"/>
</dbReference>
<dbReference type="InterPro" id="IPR009049">
    <property type="entry name" value="Argininosuccinate_lyase"/>
</dbReference>
<dbReference type="InterPro" id="IPR024083">
    <property type="entry name" value="Fumarase/histidase_N"/>
</dbReference>
<dbReference type="InterPro" id="IPR020557">
    <property type="entry name" value="Fumarate_lyase_CS"/>
</dbReference>
<dbReference type="InterPro" id="IPR000362">
    <property type="entry name" value="Fumarate_lyase_fam"/>
</dbReference>
<dbReference type="InterPro" id="IPR022761">
    <property type="entry name" value="Fumarate_lyase_N"/>
</dbReference>
<dbReference type="InterPro" id="IPR008948">
    <property type="entry name" value="L-Aspartase-like"/>
</dbReference>
<dbReference type="NCBIfam" id="TIGR00838">
    <property type="entry name" value="argH"/>
    <property type="match status" value="1"/>
</dbReference>
<dbReference type="NCBIfam" id="NF008964">
    <property type="entry name" value="PRK12308.1"/>
    <property type="match status" value="1"/>
</dbReference>
<dbReference type="PANTHER" id="PTHR43814">
    <property type="entry name" value="ARGININOSUCCINATE LYASE"/>
    <property type="match status" value="1"/>
</dbReference>
<dbReference type="PANTHER" id="PTHR43814:SF1">
    <property type="entry name" value="ARGININOSUCCINATE LYASE"/>
    <property type="match status" value="1"/>
</dbReference>
<dbReference type="Pfam" id="PF14698">
    <property type="entry name" value="ASL_C2"/>
    <property type="match status" value="1"/>
</dbReference>
<dbReference type="Pfam" id="PF00206">
    <property type="entry name" value="Lyase_1"/>
    <property type="match status" value="1"/>
</dbReference>
<dbReference type="PRINTS" id="PR00145">
    <property type="entry name" value="ARGSUCLYASE"/>
</dbReference>
<dbReference type="PRINTS" id="PR00149">
    <property type="entry name" value="FUMRATELYASE"/>
</dbReference>
<dbReference type="SUPFAM" id="SSF48557">
    <property type="entry name" value="L-aspartase-like"/>
    <property type="match status" value="1"/>
</dbReference>
<dbReference type="PROSITE" id="PS00163">
    <property type="entry name" value="FUMARATE_LYASES"/>
    <property type="match status" value="1"/>
</dbReference>
<gene>
    <name evidence="1" type="primary">argH</name>
    <name type="ordered locus">b3960</name>
    <name type="ordered locus">JW3932</name>
</gene>
<name>ARLY_ECOLI</name>
<feature type="chain" id="PRO_0000137768" description="Argininosuccinate lyase">
    <location>
        <begin position="1"/>
        <end position="457"/>
    </location>
</feature>
<feature type="sequence conflict" description="In Ref. 5; AAB59147." evidence="2" ref="5">
    <original>R</original>
    <variation>G</variation>
    <location>
        <position position="28"/>
    </location>
</feature>
<feature type="sequence conflict" description="In Ref. 5; AAB59147." evidence="2" ref="5">
    <original>W</original>
    <variation>R</variation>
    <location>
        <position position="40"/>
    </location>
</feature>
<feature type="helix" evidence="3">
    <location>
        <begin position="14"/>
        <end position="20"/>
    </location>
</feature>
<feature type="helix" evidence="3">
    <location>
        <begin position="23"/>
        <end position="26"/>
    </location>
</feature>
<feature type="helix" evidence="3">
    <location>
        <begin position="27"/>
        <end position="29"/>
    </location>
</feature>
<feature type="helix" evidence="3">
    <location>
        <begin position="30"/>
        <end position="46"/>
    </location>
</feature>
<feature type="helix" evidence="3">
    <location>
        <begin position="52"/>
        <end position="71"/>
    </location>
</feature>
<feature type="helix" evidence="3">
    <location>
        <begin position="73"/>
        <end position="78"/>
    </location>
</feature>
<feature type="helix" evidence="3">
    <location>
        <begin position="84"/>
        <end position="96"/>
    </location>
</feature>
<feature type="helix" evidence="3">
    <location>
        <begin position="97"/>
        <end position="102"/>
    </location>
</feature>
<feature type="turn" evidence="3">
    <location>
        <begin position="103"/>
        <end position="106"/>
    </location>
</feature>
<feature type="helix" evidence="3">
    <location>
        <begin position="109"/>
        <end position="144"/>
    </location>
</feature>
<feature type="turn" evidence="3">
    <location>
        <begin position="145"/>
        <end position="148"/>
    </location>
</feature>
<feature type="strand" evidence="3">
    <location>
        <begin position="150"/>
        <end position="155"/>
    </location>
</feature>
<feature type="strand" evidence="3">
    <location>
        <begin position="158"/>
        <end position="164"/>
    </location>
</feature>
<feature type="helix" evidence="3">
    <location>
        <begin position="165"/>
        <end position="190"/>
    </location>
</feature>
<feature type="turn" evidence="3">
    <location>
        <begin position="198"/>
        <end position="201"/>
    </location>
</feature>
<feature type="helix" evidence="3">
    <location>
        <begin position="209"/>
        <end position="216"/>
    </location>
</feature>
<feature type="strand" evidence="3">
    <location>
        <begin position="219"/>
        <end position="221"/>
    </location>
</feature>
<feature type="helix" evidence="3">
    <location>
        <begin position="225"/>
        <end position="230"/>
    </location>
</feature>
<feature type="helix" evidence="3">
    <location>
        <begin position="233"/>
        <end position="259"/>
    </location>
</feature>
<feature type="turn" evidence="3">
    <location>
        <begin position="262"/>
        <end position="264"/>
    </location>
</feature>
<feature type="helix" evidence="3">
    <location>
        <begin position="271"/>
        <end position="273"/>
    </location>
</feature>
<feature type="helix" evidence="3">
    <location>
        <begin position="287"/>
        <end position="294"/>
    </location>
</feature>
<feature type="helix" evidence="3">
    <location>
        <begin position="296"/>
        <end position="310"/>
    </location>
</feature>
<feature type="helix" evidence="3">
    <location>
        <begin position="319"/>
        <end position="323"/>
    </location>
</feature>
<feature type="helix" evidence="3">
    <location>
        <begin position="324"/>
        <end position="346"/>
    </location>
</feature>
<feature type="helix" evidence="3">
    <location>
        <begin position="353"/>
        <end position="360"/>
    </location>
</feature>
<feature type="turn" evidence="3">
    <location>
        <begin position="363"/>
        <end position="366"/>
    </location>
</feature>
<feature type="helix" evidence="3">
    <location>
        <begin position="367"/>
        <end position="376"/>
    </location>
</feature>
<feature type="helix" evidence="3">
    <location>
        <begin position="381"/>
        <end position="398"/>
    </location>
</feature>
<feature type="helix" evidence="3">
    <location>
        <begin position="402"/>
        <end position="404"/>
    </location>
</feature>
<feature type="helix" evidence="3">
    <location>
        <begin position="407"/>
        <end position="410"/>
    </location>
</feature>
<feature type="turn" evidence="3">
    <location>
        <begin position="411"/>
        <end position="413"/>
    </location>
</feature>
<feature type="helix" evidence="3">
    <location>
        <begin position="421"/>
        <end position="424"/>
    </location>
</feature>
<feature type="helix" evidence="3">
    <location>
        <begin position="427"/>
        <end position="432"/>
    </location>
</feature>
<feature type="helix" evidence="3">
    <location>
        <begin position="442"/>
        <end position="456"/>
    </location>
</feature>
<protein>
    <recommendedName>
        <fullName evidence="1">Argininosuccinate lyase</fullName>
        <shortName evidence="1">ASAL</shortName>
        <ecNumber evidence="1">4.3.2.1</ecNumber>
    </recommendedName>
    <alternativeName>
        <fullName evidence="1">Arginosuccinase</fullName>
    </alternativeName>
</protein>
<reference key="1">
    <citation type="journal article" date="1993" name="Nucleic Acids Res.">
        <title>Analysis of the Escherichia coli genome. IV. DNA sequence of the region from 89.2 to 92.8 minutes.</title>
        <authorList>
            <person name="Blattner F.R."/>
            <person name="Burland V.D."/>
            <person name="Plunkett G. III"/>
            <person name="Sofia H.J."/>
            <person name="Daniels D.L."/>
        </authorList>
    </citation>
    <scope>NUCLEOTIDE SEQUENCE [LARGE SCALE GENOMIC DNA]</scope>
    <source>
        <strain>K12 / MG1655 / ATCC 47076</strain>
    </source>
</reference>
<reference key="2">
    <citation type="journal article" date="1997" name="Science">
        <title>The complete genome sequence of Escherichia coli K-12.</title>
        <authorList>
            <person name="Blattner F.R."/>
            <person name="Plunkett G. III"/>
            <person name="Bloch C.A."/>
            <person name="Perna N.T."/>
            <person name="Burland V."/>
            <person name="Riley M."/>
            <person name="Collado-Vides J."/>
            <person name="Glasner J.D."/>
            <person name="Rode C.K."/>
            <person name="Mayhew G.F."/>
            <person name="Gregor J."/>
            <person name="Davis N.W."/>
            <person name="Kirkpatrick H.A."/>
            <person name="Goeden M.A."/>
            <person name="Rose D.J."/>
            <person name="Mau B."/>
            <person name="Shao Y."/>
        </authorList>
    </citation>
    <scope>NUCLEOTIDE SEQUENCE [LARGE SCALE GENOMIC DNA]</scope>
    <source>
        <strain>K12 / MG1655 / ATCC 47076</strain>
    </source>
</reference>
<reference key="3">
    <citation type="journal article" date="2006" name="Mol. Syst. Biol.">
        <title>Highly accurate genome sequences of Escherichia coli K-12 strains MG1655 and W3110.</title>
        <authorList>
            <person name="Hayashi K."/>
            <person name="Morooka N."/>
            <person name="Yamamoto Y."/>
            <person name="Fujita K."/>
            <person name="Isono K."/>
            <person name="Choi S."/>
            <person name="Ohtsubo E."/>
            <person name="Baba T."/>
            <person name="Wanner B.L."/>
            <person name="Mori H."/>
            <person name="Horiuchi T."/>
        </authorList>
    </citation>
    <scope>NUCLEOTIDE SEQUENCE [LARGE SCALE GENOMIC DNA]</scope>
    <source>
        <strain>K12 / W3110 / ATCC 27325 / DSM 5911</strain>
    </source>
</reference>
<reference key="4">
    <citation type="journal article" date="1988" name="Gene">
        <title>Nucleotide sequence of Escherichia coli argB and argC genes: comparison of N-acetylglutamate kinase and N-acetylglutamate-gamma-semialdehyde dehydrogenase with homologous and analogous enzymes.</title>
        <authorList>
            <person name="Parsot C."/>
            <person name="Boyen A."/>
            <person name="Cohen G.N."/>
            <person name="Glansdorff N."/>
        </authorList>
    </citation>
    <scope>NUCLEOTIDE SEQUENCE [GENOMIC DNA] OF 1-51</scope>
</reference>
<reference key="5">
    <citation type="journal article" date="1982" name="Nucleic Acids Res.">
        <title>IS3 can function as a mobile promoter in E. coli.</title>
        <authorList>
            <person name="Charlier D.R.M."/>
            <person name="Piette J."/>
            <person name="Glansdorff N."/>
        </authorList>
    </citation>
    <scope>NUCLEOTIDE SEQUENCE [GENOMIC DNA] OF 1-44</scope>
    <source>
        <strain>K12</strain>
    </source>
</reference>
<evidence type="ECO:0000255" key="1">
    <source>
        <dbReference type="HAMAP-Rule" id="MF_00006"/>
    </source>
</evidence>
<evidence type="ECO:0000305" key="2"/>
<evidence type="ECO:0007829" key="3">
    <source>
        <dbReference type="PDB" id="1TJ7"/>
    </source>
</evidence>
<organism>
    <name type="scientific">Escherichia coli (strain K12)</name>
    <dbReference type="NCBI Taxonomy" id="83333"/>
    <lineage>
        <taxon>Bacteria</taxon>
        <taxon>Pseudomonadati</taxon>
        <taxon>Pseudomonadota</taxon>
        <taxon>Gammaproteobacteria</taxon>
        <taxon>Enterobacterales</taxon>
        <taxon>Enterobacteriaceae</taxon>
        <taxon>Escherichia</taxon>
    </lineage>
</organism>
<comment type="catalytic activity">
    <reaction evidence="1">
        <text>2-(N(omega)-L-arginino)succinate = fumarate + L-arginine</text>
        <dbReference type="Rhea" id="RHEA:24020"/>
        <dbReference type="ChEBI" id="CHEBI:29806"/>
        <dbReference type="ChEBI" id="CHEBI:32682"/>
        <dbReference type="ChEBI" id="CHEBI:57472"/>
        <dbReference type="EC" id="4.3.2.1"/>
    </reaction>
</comment>
<comment type="pathway">
    <text evidence="1">Amino-acid biosynthesis; L-arginine biosynthesis; L-arginine from L-ornithine and carbamoyl phosphate: step 3/3.</text>
</comment>
<comment type="subcellular location">
    <subcellularLocation>
        <location evidence="2">Cytoplasm</location>
    </subcellularLocation>
</comment>
<comment type="similarity">
    <text evidence="1">Belongs to the lyase 1 family. Argininosuccinate lyase subfamily.</text>
</comment>
<proteinExistence type="evidence at protein level"/>
<accession>P11447</accession>
<accession>Q2M8Q5</accession>
<accession>Q47060</accession>
<keyword id="KW-0002">3D-structure</keyword>
<keyword id="KW-0028">Amino-acid biosynthesis</keyword>
<keyword id="KW-0055">Arginine biosynthesis</keyword>
<keyword id="KW-0963">Cytoplasm</keyword>
<keyword id="KW-0456">Lyase</keyword>
<keyword id="KW-1185">Reference proteome</keyword>